<dbReference type="EC" id="2.5.1.6" evidence="1"/>
<dbReference type="EMBL" id="CP000742">
    <property type="protein sequence ID" value="ABR54848.1"/>
    <property type="molecule type" value="Genomic_DNA"/>
</dbReference>
<dbReference type="RefSeq" id="WP_012065777.1">
    <property type="nucleotide sequence ID" value="NC_009634.1"/>
</dbReference>
<dbReference type="SMR" id="A6UQS6"/>
<dbReference type="STRING" id="406327.Mevan_0945"/>
<dbReference type="GeneID" id="5325985"/>
<dbReference type="KEGG" id="mvn:Mevan_0945"/>
<dbReference type="eggNOG" id="arCOG01678">
    <property type="taxonomic scope" value="Archaea"/>
</dbReference>
<dbReference type="HOGENOM" id="CLU_057642_0_0_2"/>
<dbReference type="OrthoDB" id="204488at2157"/>
<dbReference type="UniPathway" id="UPA00315">
    <property type="reaction ID" value="UER00080"/>
</dbReference>
<dbReference type="Proteomes" id="UP000001107">
    <property type="component" value="Chromosome"/>
</dbReference>
<dbReference type="GO" id="GO:0005524">
    <property type="term" value="F:ATP binding"/>
    <property type="evidence" value="ECO:0007669"/>
    <property type="project" value="UniProtKB-UniRule"/>
</dbReference>
<dbReference type="GO" id="GO:0000287">
    <property type="term" value="F:magnesium ion binding"/>
    <property type="evidence" value="ECO:0007669"/>
    <property type="project" value="UniProtKB-UniRule"/>
</dbReference>
<dbReference type="GO" id="GO:0004478">
    <property type="term" value="F:methionine adenosyltransferase activity"/>
    <property type="evidence" value="ECO:0007669"/>
    <property type="project" value="UniProtKB-UniRule"/>
</dbReference>
<dbReference type="GO" id="GO:0006730">
    <property type="term" value="P:one-carbon metabolic process"/>
    <property type="evidence" value="ECO:0007669"/>
    <property type="project" value="UniProtKB-KW"/>
</dbReference>
<dbReference type="GO" id="GO:0006556">
    <property type="term" value="P:S-adenosylmethionine biosynthetic process"/>
    <property type="evidence" value="ECO:0007669"/>
    <property type="project" value="UniProtKB-UniRule"/>
</dbReference>
<dbReference type="Gene3D" id="3.30.300.10">
    <property type="match status" value="1"/>
</dbReference>
<dbReference type="Gene3D" id="3.30.300.280">
    <property type="entry name" value="S-adenosylmethionine synthetase, C-terminal domain"/>
    <property type="match status" value="2"/>
</dbReference>
<dbReference type="HAMAP" id="MF_00136">
    <property type="entry name" value="S_AdoMet_synth2"/>
    <property type="match status" value="1"/>
</dbReference>
<dbReference type="InterPro" id="IPR027790">
    <property type="entry name" value="AdoMet_synthase_2_family"/>
</dbReference>
<dbReference type="InterPro" id="IPR042544">
    <property type="entry name" value="AdoMet_synthase_3"/>
</dbReference>
<dbReference type="InterPro" id="IPR002795">
    <property type="entry name" value="S-AdoMet_synthetase_arc"/>
</dbReference>
<dbReference type="NCBIfam" id="NF003364">
    <property type="entry name" value="PRK04439.1-3"/>
    <property type="match status" value="1"/>
</dbReference>
<dbReference type="NCBIfam" id="NF003366">
    <property type="entry name" value="PRK04439.1-5"/>
    <property type="match status" value="1"/>
</dbReference>
<dbReference type="PANTHER" id="PTHR36697">
    <property type="entry name" value="S-ADENOSYLMETHIONINE SYNTHASE"/>
    <property type="match status" value="1"/>
</dbReference>
<dbReference type="PANTHER" id="PTHR36697:SF1">
    <property type="entry name" value="S-ADENOSYLMETHIONINE SYNTHASE"/>
    <property type="match status" value="1"/>
</dbReference>
<dbReference type="Pfam" id="PF01941">
    <property type="entry name" value="AdoMet_Synthase"/>
    <property type="match status" value="1"/>
</dbReference>
<name>METK_METVS</name>
<accession>A6UQS6</accession>
<organism>
    <name type="scientific">Methanococcus vannielii (strain ATCC 35089 / DSM 1224 / JCM 13029 / OCM 148 / SB)</name>
    <dbReference type="NCBI Taxonomy" id="406327"/>
    <lineage>
        <taxon>Archaea</taxon>
        <taxon>Methanobacteriati</taxon>
        <taxon>Methanobacteriota</taxon>
        <taxon>Methanomada group</taxon>
        <taxon>Methanococci</taxon>
        <taxon>Methanococcales</taxon>
        <taxon>Methanococcaceae</taxon>
        <taxon>Methanococcus</taxon>
    </lineage>
</organism>
<proteinExistence type="inferred from homology"/>
<gene>
    <name evidence="1" type="primary">mat</name>
    <name type="ordered locus">Mevan_0945</name>
</gene>
<protein>
    <recommendedName>
        <fullName evidence="1">S-adenosylmethionine synthase</fullName>
        <shortName evidence="1">AdoMet synthase</shortName>
        <ecNumber evidence="1">2.5.1.6</ecNumber>
    </recommendedName>
    <alternativeName>
        <fullName evidence="1">Methionine adenosyltransferase</fullName>
    </alternativeName>
</protein>
<reference key="1">
    <citation type="submission" date="2007-06" db="EMBL/GenBank/DDBJ databases">
        <title>Complete sequence of Methanococcus vannielii SB.</title>
        <authorList>
            <consortium name="US DOE Joint Genome Institute"/>
            <person name="Copeland A."/>
            <person name="Lucas S."/>
            <person name="Lapidus A."/>
            <person name="Barry K."/>
            <person name="Glavina del Rio T."/>
            <person name="Dalin E."/>
            <person name="Tice H."/>
            <person name="Pitluck S."/>
            <person name="Chain P."/>
            <person name="Malfatti S."/>
            <person name="Shin M."/>
            <person name="Vergez L."/>
            <person name="Schmutz J."/>
            <person name="Larimer F."/>
            <person name="Land M."/>
            <person name="Hauser L."/>
            <person name="Kyrpides N."/>
            <person name="Anderson I."/>
            <person name="Sieprawska-Lupa M."/>
            <person name="Whitman W.B."/>
            <person name="Richardson P."/>
        </authorList>
    </citation>
    <scope>NUCLEOTIDE SEQUENCE [LARGE SCALE GENOMIC DNA]</scope>
    <source>
        <strain>ATCC 35089 / DSM 1224 / JCM 13029 / OCM 148 / SB</strain>
    </source>
</reference>
<evidence type="ECO:0000255" key="1">
    <source>
        <dbReference type="HAMAP-Rule" id="MF_00136"/>
    </source>
</evidence>
<comment type="function">
    <text evidence="1">Catalyzes the formation of S-adenosylmethionine from methionine and ATP.</text>
</comment>
<comment type="catalytic activity">
    <reaction evidence="1">
        <text>L-methionine + ATP + H2O = S-adenosyl-L-methionine + phosphate + diphosphate</text>
        <dbReference type="Rhea" id="RHEA:21080"/>
        <dbReference type="ChEBI" id="CHEBI:15377"/>
        <dbReference type="ChEBI" id="CHEBI:30616"/>
        <dbReference type="ChEBI" id="CHEBI:33019"/>
        <dbReference type="ChEBI" id="CHEBI:43474"/>
        <dbReference type="ChEBI" id="CHEBI:57844"/>
        <dbReference type="ChEBI" id="CHEBI:59789"/>
        <dbReference type="EC" id="2.5.1.6"/>
    </reaction>
</comment>
<comment type="cofactor">
    <cofactor evidence="1">
        <name>Mg(2+)</name>
        <dbReference type="ChEBI" id="CHEBI:18420"/>
    </cofactor>
</comment>
<comment type="pathway">
    <text evidence="1">Amino-acid biosynthesis; S-adenosyl-L-methionine biosynthesis; S-adenosyl-L-methionine from L-methionine: step 1/1.</text>
</comment>
<comment type="similarity">
    <text evidence="1">Belongs to the AdoMet synthase 2 family.</text>
</comment>
<feature type="chain" id="PRO_1000018656" description="S-adenosylmethionine synthase">
    <location>
        <begin position="1"/>
        <end position="404"/>
    </location>
</feature>
<feature type="binding site" evidence="1">
    <location>
        <begin position="141"/>
        <end position="146"/>
    </location>
    <ligand>
        <name>ATP</name>
        <dbReference type="ChEBI" id="CHEBI:30616"/>
    </ligand>
</feature>
<keyword id="KW-0067">ATP-binding</keyword>
<keyword id="KW-0460">Magnesium</keyword>
<keyword id="KW-0547">Nucleotide-binding</keyword>
<keyword id="KW-0554">One-carbon metabolism</keyword>
<keyword id="KW-0808">Transferase</keyword>
<sequence>MANIVVKKLERTPIDETPVEIVERKGIGHPDSICDGIAESVSVALCKMYKEKLGVVLHHNTDQVELVGGYAYPKLGGGCMINPIYVLLSGRATAEVLDKETGKIVKLPVNTTAVNAAREYLKKALRNIDLEKDVVVDCRIGQGSVDLVEVFDRKRSEIPHANDTSFGVGHAPLSTTEKIVLETEKLLNSAELKAIVPGVGEDIKVMGLREGKKITLTIAMAVVDKYADSLEEYEKVKEMAHKKVVENAQKYLNGHELEVFINTADDEECIFLTVTGTSAEMGDDGSVGRGNRANGLITPFRPMSMEATSGKNPINHIGKIYNILSNIIASDVAELEEVKECQIRILSQIGKPITEPKILSIEVIPENGFTLDDVTKKATEVAEKWLDNIQNVTEKIVEGKVTTF</sequence>